<evidence type="ECO:0000255" key="1">
    <source>
        <dbReference type="HAMAP-Rule" id="MF_00034"/>
    </source>
</evidence>
<feature type="chain" id="PRO_1000071027" description="Crossover junction endodeoxyribonuclease RuvC">
    <location>
        <begin position="1"/>
        <end position="166"/>
    </location>
</feature>
<feature type="active site" evidence="1">
    <location>
        <position position="7"/>
    </location>
</feature>
<feature type="active site" evidence="1">
    <location>
        <position position="68"/>
    </location>
</feature>
<feature type="active site" evidence="1">
    <location>
        <position position="141"/>
    </location>
</feature>
<feature type="binding site" evidence="1">
    <location>
        <position position="7"/>
    </location>
    <ligand>
        <name>Mg(2+)</name>
        <dbReference type="ChEBI" id="CHEBI:18420"/>
        <label>1</label>
    </ligand>
</feature>
<feature type="binding site" evidence="1">
    <location>
        <position position="68"/>
    </location>
    <ligand>
        <name>Mg(2+)</name>
        <dbReference type="ChEBI" id="CHEBI:18420"/>
        <label>2</label>
    </ligand>
</feature>
<feature type="binding site" evidence="1">
    <location>
        <position position="141"/>
    </location>
    <ligand>
        <name>Mg(2+)</name>
        <dbReference type="ChEBI" id="CHEBI:18420"/>
        <label>1</label>
    </ligand>
</feature>
<protein>
    <recommendedName>
        <fullName evidence="1">Crossover junction endodeoxyribonuclease RuvC</fullName>
        <ecNumber evidence="1">3.1.21.10</ecNumber>
    </recommendedName>
    <alternativeName>
        <fullName evidence="1">Holliday junction nuclease RuvC</fullName>
    </alternativeName>
    <alternativeName>
        <fullName evidence="1">Holliday junction resolvase RuvC</fullName>
    </alternativeName>
</protein>
<name>RUVC_KORVE</name>
<sequence>MRVMGIDCGSEYTGFGIVESDDRARLHCIVAGAVHLSARDPLENKLAKIFRELCSVIREHDPEVVAIEDVFYAVNAKSALKLGHVRGVAMLAVAECGLRVATYAPLAVKSAVVGYGKAEKCQVQAMVARLLNLPQVPEPADVADALAIAICHLHTSATLTRMHAKA</sequence>
<organism>
    <name type="scientific">Koribacter versatilis (strain Ellin345)</name>
    <dbReference type="NCBI Taxonomy" id="204669"/>
    <lineage>
        <taxon>Bacteria</taxon>
        <taxon>Pseudomonadati</taxon>
        <taxon>Acidobacteriota</taxon>
        <taxon>Terriglobia</taxon>
        <taxon>Terriglobales</taxon>
        <taxon>Candidatus Korobacteraceae</taxon>
        <taxon>Candidatus Korobacter</taxon>
    </lineage>
</organism>
<accession>Q1IKI1</accession>
<keyword id="KW-0963">Cytoplasm</keyword>
<keyword id="KW-0227">DNA damage</keyword>
<keyword id="KW-0233">DNA recombination</keyword>
<keyword id="KW-0234">DNA repair</keyword>
<keyword id="KW-0238">DNA-binding</keyword>
<keyword id="KW-0255">Endonuclease</keyword>
<keyword id="KW-0378">Hydrolase</keyword>
<keyword id="KW-0460">Magnesium</keyword>
<keyword id="KW-0479">Metal-binding</keyword>
<keyword id="KW-0540">Nuclease</keyword>
<keyword id="KW-1185">Reference proteome</keyword>
<comment type="function">
    <text evidence="1">The RuvA-RuvB-RuvC complex processes Holliday junction (HJ) DNA during genetic recombination and DNA repair. Endonuclease that resolves HJ intermediates. Cleaves cruciform DNA by making single-stranded nicks across the HJ at symmetrical positions within the homologous arms, yielding a 5'-phosphate and a 3'-hydroxyl group; requires a central core of homology in the junction. The consensus cleavage sequence is 5'-(A/T)TT(C/G)-3'. Cleavage occurs on the 3'-side of the TT dinucleotide at the point of strand exchange. HJ branch migration catalyzed by RuvA-RuvB allows RuvC to scan DNA until it finds its consensus sequence, where it cleaves and resolves the cruciform DNA.</text>
</comment>
<comment type="catalytic activity">
    <reaction evidence="1">
        <text>Endonucleolytic cleavage at a junction such as a reciprocal single-stranded crossover between two homologous DNA duplexes (Holliday junction).</text>
        <dbReference type="EC" id="3.1.21.10"/>
    </reaction>
</comment>
<comment type="cofactor">
    <cofactor evidence="1">
        <name>Mg(2+)</name>
        <dbReference type="ChEBI" id="CHEBI:18420"/>
    </cofactor>
    <text evidence="1">Binds 2 Mg(2+) ion per subunit.</text>
</comment>
<comment type="subunit">
    <text evidence="1">Homodimer which binds Holliday junction (HJ) DNA. The HJ becomes 2-fold symmetrical on binding to RuvC with unstacked arms; it has a different conformation from HJ DNA in complex with RuvA. In the full resolvosome a probable DNA-RuvA(4)-RuvB(12)-RuvC(2) complex forms which resolves the HJ.</text>
</comment>
<comment type="subcellular location">
    <subcellularLocation>
        <location evidence="1">Cytoplasm</location>
    </subcellularLocation>
</comment>
<comment type="similarity">
    <text evidence="1">Belongs to the RuvC family.</text>
</comment>
<proteinExistence type="inferred from homology"/>
<reference key="1">
    <citation type="journal article" date="2009" name="Appl. Environ. Microbiol.">
        <title>Three genomes from the phylum Acidobacteria provide insight into the lifestyles of these microorganisms in soils.</title>
        <authorList>
            <person name="Ward N.L."/>
            <person name="Challacombe J.F."/>
            <person name="Janssen P.H."/>
            <person name="Henrissat B."/>
            <person name="Coutinho P.M."/>
            <person name="Wu M."/>
            <person name="Xie G."/>
            <person name="Haft D.H."/>
            <person name="Sait M."/>
            <person name="Badger J."/>
            <person name="Barabote R.D."/>
            <person name="Bradley B."/>
            <person name="Brettin T.S."/>
            <person name="Brinkac L.M."/>
            <person name="Bruce D."/>
            <person name="Creasy T."/>
            <person name="Daugherty S.C."/>
            <person name="Davidsen T.M."/>
            <person name="DeBoy R.T."/>
            <person name="Detter J.C."/>
            <person name="Dodson R.J."/>
            <person name="Durkin A.S."/>
            <person name="Ganapathy A."/>
            <person name="Gwinn-Giglio M."/>
            <person name="Han C.S."/>
            <person name="Khouri H."/>
            <person name="Kiss H."/>
            <person name="Kothari S.P."/>
            <person name="Madupu R."/>
            <person name="Nelson K.E."/>
            <person name="Nelson W.C."/>
            <person name="Paulsen I."/>
            <person name="Penn K."/>
            <person name="Ren Q."/>
            <person name="Rosovitz M.J."/>
            <person name="Selengut J.D."/>
            <person name="Shrivastava S."/>
            <person name="Sullivan S.A."/>
            <person name="Tapia R."/>
            <person name="Thompson L.S."/>
            <person name="Watkins K.L."/>
            <person name="Yang Q."/>
            <person name="Yu C."/>
            <person name="Zafar N."/>
            <person name="Zhou L."/>
            <person name="Kuske C.R."/>
        </authorList>
    </citation>
    <scope>NUCLEOTIDE SEQUENCE [LARGE SCALE GENOMIC DNA]</scope>
    <source>
        <strain>Ellin345</strain>
    </source>
</reference>
<gene>
    <name evidence="1" type="primary">ruvC</name>
    <name type="ordered locus">Acid345_3618</name>
</gene>
<dbReference type="EC" id="3.1.21.10" evidence="1"/>
<dbReference type="EMBL" id="CP000360">
    <property type="protein sequence ID" value="ABF42619.1"/>
    <property type="molecule type" value="Genomic_DNA"/>
</dbReference>
<dbReference type="RefSeq" id="WP_011524418.1">
    <property type="nucleotide sequence ID" value="NC_008009.1"/>
</dbReference>
<dbReference type="SMR" id="Q1IKI1"/>
<dbReference type="STRING" id="204669.Acid345_3618"/>
<dbReference type="EnsemblBacteria" id="ABF42619">
    <property type="protein sequence ID" value="ABF42619"/>
    <property type="gene ID" value="Acid345_3618"/>
</dbReference>
<dbReference type="KEGG" id="aba:Acid345_3618"/>
<dbReference type="eggNOG" id="COG0817">
    <property type="taxonomic scope" value="Bacteria"/>
</dbReference>
<dbReference type="HOGENOM" id="CLU_091257_3_1_0"/>
<dbReference type="OrthoDB" id="9805499at2"/>
<dbReference type="Proteomes" id="UP000002432">
    <property type="component" value="Chromosome"/>
</dbReference>
<dbReference type="GO" id="GO:0005737">
    <property type="term" value="C:cytoplasm"/>
    <property type="evidence" value="ECO:0007669"/>
    <property type="project" value="UniProtKB-SubCell"/>
</dbReference>
<dbReference type="GO" id="GO:0048476">
    <property type="term" value="C:Holliday junction resolvase complex"/>
    <property type="evidence" value="ECO:0007669"/>
    <property type="project" value="UniProtKB-UniRule"/>
</dbReference>
<dbReference type="GO" id="GO:0008821">
    <property type="term" value="F:crossover junction DNA endonuclease activity"/>
    <property type="evidence" value="ECO:0007669"/>
    <property type="project" value="UniProtKB-UniRule"/>
</dbReference>
<dbReference type="GO" id="GO:0003677">
    <property type="term" value="F:DNA binding"/>
    <property type="evidence" value="ECO:0007669"/>
    <property type="project" value="UniProtKB-KW"/>
</dbReference>
<dbReference type="GO" id="GO:0000287">
    <property type="term" value="F:magnesium ion binding"/>
    <property type="evidence" value="ECO:0007669"/>
    <property type="project" value="UniProtKB-UniRule"/>
</dbReference>
<dbReference type="GO" id="GO:0006310">
    <property type="term" value="P:DNA recombination"/>
    <property type="evidence" value="ECO:0007669"/>
    <property type="project" value="UniProtKB-UniRule"/>
</dbReference>
<dbReference type="GO" id="GO:0006281">
    <property type="term" value="P:DNA repair"/>
    <property type="evidence" value="ECO:0007669"/>
    <property type="project" value="UniProtKB-UniRule"/>
</dbReference>
<dbReference type="CDD" id="cd16962">
    <property type="entry name" value="RuvC"/>
    <property type="match status" value="1"/>
</dbReference>
<dbReference type="FunFam" id="3.30.420.10:FF:000002">
    <property type="entry name" value="Crossover junction endodeoxyribonuclease RuvC"/>
    <property type="match status" value="1"/>
</dbReference>
<dbReference type="Gene3D" id="3.30.420.10">
    <property type="entry name" value="Ribonuclease H-like superfamily/Ribonuclease H"/>
    <property type="match status" value="1"/>
</dbReference>
<dbReference type="HAMAP" id="MF_00034">
    <property type="entry name" value="RuvC"/>
    <property type="match status" value="1"/>
</dbReference>
<dbReference type="InterPro" id="IPR012337">
    <property type="entry name" value="RNaseH-like_sf"/>
</dbReference>
<dbReference type="InterPro" id="IPR036397">
    <property type="entry name" value="RNaseH_sf"/>
</dbReference>
<dbReference type="InterPro" id="IPR020563">
    <property type="entry name" value="X-over_junc_endoDNase_Mg_BS"/>
</dbReference>
<dbReference type="InterPro" id="IPR002176">
    <property type="entry name" value="X-over_junc_endoDNase_RuvC"/>
</dbReference>
<dbReference type="NCBIfam" id="NF000711">
    <property type="entry name" value="PRK00039.2-1"/>
    <property type="match status" value="1"/>
</dbReference>
<dbReference type="NCBIfam" id="TIGR00228">
    <property type="entry name" value="ruvC"/>
    <property type="match status" value="1"/>
</dbReference>
<dbReference type="PANTHER" id="PTHR30194">
    <property type="entry name" value="CROSSOVER JUNCTION ENDODEOXYRIBONUCLEASE RUVC"/>
    <property type="match status" value="1"/>
</dbReference>
<dbReference type="PANTHER" id="PTHR30194:SF3">
    <property type="entry name" value="CROSSOVER JUNCTION ENDODEOXYRIBONUCLEASE RUVC"/>
    <property type="match status" value="1"/>
</dbReference>
<dbReference type="Pfam" id="PF02075">
    <property type="entry name" value="RuvC"/>
    <property type="match status" value="1"/>
</dbReference>
<dbReference type="PRINTS" id="PR00696">
    <property type="entry name" value="RSOLVASERUVC"/>
</dbReference>
<dbReference type="SUPFAM" id="SSF53098">
    <property type="entry name" value="Ribonuclease H-like"/>
    <property type="match status" value="1"/>
</dbReference>
<dbReference type="PROSITE" id="PS01321">
    <property type="entry name" value="RUVC"/>
    <property type="match status" value="1"/>
</dbReference>